<gene>
    <name type="ordered locus">MTH_677</name>
</gene>
<organism>
    <name type="scientific">Methanothermobacter thermautotrophicus (strain ATCC 29096 / DSM 1053 / JCM 10044 / NBRC 100330 / Delta H)</name>
    <name type="common">Methanobacterium thermoautotrophicum</name>
    <dbReference type="NCBI Taxonomy" id="187420"/>
    <lineage>
        <taxon>Archaea</taxon>
        <taxon>Methanobacteriati</taxon>
        <taxon>Methanobacteriota</taxon>
        <taxon>Methanomada group</taxon>
        <taxon>Methanobacteria</taxon>
        <taxon>Methanobacteriales</taxon>
        <taxon>Methanobacteriaceae</taxon>
        <taxon>Methanothermobacter</taxon>
    </lineage>
</organism>
<evidence type="ECO:0000305" key="1"/>
<evidence type="ECO:0007829" key="2">
    <source>
        <dbReference type="PDB" id="1PU1"/>
    </source>
</evidence>
<sequence>MSLRKLTEGDLDEISSFLHNTISDFILKRVSAKEIVDIDITVLVEYTDELKVDISAELYLDELSDADPGIVDEAVDAAYRSLESFLDGFRE</sequence>
<comment type="similarity">
    <text evidence="1">Belongs to the UPF0440 family.</text>
</comment>
<dbReference type="EMBL" id="AE000666">
    <property type="protein sequence ID" value="AAB85182.1"/>
    <property type="molecule type" value="Genomic_DNA"/>
</dbReference>
<dbReference type="PIR" id="B69190">
    <property type="entry name" value="B69190"/>
</dbReference>
<dbReference type="RefSeq" id="WP_010876315.1">
    <property type="nucleotide sequence ID" value="NC_000916.1"/>
</dbReference>
<dbReference type="PDB" id="1PU1">
    <property type="method" value="NMR"/>
    <property type="chains" value="A=1-91"/>
</dbReference>
<dbReference type="PDBsum" id="1PU1"/>
<dbReference type="BMRB" id="O26773"/>
<dbReference type="SMR" id="O26773"/>
<dbReference type="STRING" id="187420.MTH_677"/>
<dbReference type="PaxDb" id="187420-MTH_677"/>
<dbReference type="EnsemblBacteria" id="AAB85182">
    <property type="protein sequence ID" value="AAB85182"/>
    <property type="gene ID" value="MTH_677"/>
</dbReference>
<dbReference type="KEGG" id="mth:MTH_677"/>
<dbReference type="HOGENOM" id="CLU_182712_0_0_2"/>
<dbReference type="InParanoid" id="O26773"/>
<dbReference type="EvolutionaryTrace" id="O26773"/>
<dbReference type="Proteomes" id="UP000005223">
    <property type="component" value="Chromosome"/>
</dbReference>
<dbReference type="Gene3D" id="3.30.300.100">
    <property type="entry name" value="MTH677-like"/>
    <property type="match status" value="1"/>
</dbReference>
<dbReference type="InterPro" id="IPR024502">
    <property type="entry name" value="DUF3194"/>
</dbReference>
<dbReference type="InterPro" id="IPR035954">
    <property type="entry name" value="MTH677-like_sf"/>
</dbReference>
<dbReference type="Pfam" id="PF11419">
    <property type="entry name" value="DUF3194"/>
    <property type="match status" value="1"/>
</dbReference>
<dbReference type="SUPFAM" id="SSF110783">
    <property type="entry name" value="Hypothetical protein MTH677"/>
    <property type="match status" value="1"/>
</dbReference>
<keyword id="KW-0002">3D-structure</keyword>
<keyword id="KW-1185">Reference proteome</keyword>
<reference key="1">
    <citation type="journal article" date="1997" name="J. Bacteriol.">
        <title>Complete genome sequence of Methanobacterium thermoautotrophicum deltaH: functional analysis and comparative genomics.</title>
        <authorList>
            <person name="Smith D.R."/>
            <person name="Doucette-Stamm L.A."/>
            <person name="Deloughery C."/>
            <person name="Lee H.-M."/>
            <person name="Dubois J."/>
            <person name="Aldredge T."/>
            <person name="Bashirzadeh R."/>
            <person name="Blakely D."/>
            <person name="Cook R."/>
            <person name="Gilbert K."/>
            <person name="Harrison D."/>
            <person name="Hoang L."/>
            <person name="Keagle P."/>
            <person name="Lumm W."/>
            <person name="Pothier B."/>
            <person name="Qiu D."/>
            <person name="Spadafora R."/>
            <person name="Vicare R."/>
            <person name="Wang Y."/>
            <person name="Wierzbowski J."/>
            <person name="Gibson R."/>
            <person name="Jiwani N."/>
            <person name="Caruso A."/>
            <person name="Bush D."/>
            <person name="Safer H."/>
            <person name="Patwell D."/>
            <person name="Prabhakar S."/>
            <person name="McDougall S."/>
            <person name="Shimer G."/>
            <person name="Goyal A."/>
            <person name="Pietrovski S."/>
            <person name="Church G.M."/>
            <person name="Daniels C.J."/>
            <person name="Mao J.-I."/>
            <person name="Rice P."/>
            <person name="Noelling J."/>
            <person name="Reeve J.N."/>
        </authorList>
    </citation>
    <scope>NUCLEOTIDE SEQUENCE [LARGE SCALE GENOMIC DNA]</scope>
    <source>
        <strain>ATCC 29096 / DSM 1053 / JCM 10044 / NBRC 100330 / Delta H</strain>
    </source>
</reference>
<reference key="2">
    <citation type="journal article" date="2004" name="Protein Sci.">
        <title>Solution structure of the hypothetical protein Mth677 from Methanobacterium thermoautotrophicum: a novel alpha+beta fold.</title>
        <authorList>
            <person name="Blanco F.J."/>
            <person name="Yee A."/>
            <person name="Campos-Olivas R."/>
            <person name="Ortiz A.R."/>
            <person name="Devos D."/>
            <person name="Valencia A."/>
            <person name="Arrowsmith C.H."/>
            <person name="Rico M."/>
        </authorList>
    </citation>
    <scope>STRUCTURE BY NMR</scope>
</reference>
<accession>O26773</accession>
<name>Y677_METTH</name>
<protein>
    <recommendedName>
        <fullName>Uncharacterized protein MTH_677</fullName>
    </recommendedName>
</protein>
<feature type="chain" id="PRO_0000293125" description="Uncharacterized protein MTH_677">
    <location>
        <begin position="1"/>
        <end position="91"/>
    </location>
</feature>
<feature type="helix" evidence="2">
    <location>
        <begin position="8"/>
        <end position="27"/>
    </location>
</feature>
<feature type="turn" evidence="2">
    <location>
        <begin position="32"/>
        <end position="34"/>
    </location>
</feature>
<feature type="strand" evidence="2">
    <location>
        <begin position="35"/>
        <end position="60"/>
    </location>
</feature>
<feature type="helix" evidence="2">
    <location>
        <begin position="70"/>
        <end position="90"/>
    </location>
</feature>
<proteinExistence type="evidence at protein level"/>